<keyword id="KW-0056">Arginine metabolism</keyword>
<keyword id="KW-0963">Cytoplasm</keyword>
<keyword id="KW-0808">Transferase</keyword>
<feature type="chain" id="PRO_0000113023" description="Ornithine carbamoyltransferase 1, catabolic">
    <location>
        <begin position="1"/>
        <end position="332"/>
    </location>
</feature>
<feature type="binding site" evidence="2">
    <location>
        <begin position="56"/>
        <end position="59"/>
    </location>
    <ligand>
        <name>carbamoyl phosphate</name>
        <dbReference type="ChEBI" id="CHEBI:58228"/>
    </ligand>
</feature>
<feature type="binding site" evidence="2">
    <location>
        <position position="83"/>
    </location>
    <ligand>
        <name>carbamoyl phosphate</name>
        <dbReference type="ChEBI" id="CHEBI:58228"/>
    </ligand>
</feature>
<feature type="binding site" evidence="2">
    <location>
        <position position="107"/>
    </location>
    <ligand>
        <name>carbamoyl phosphate</name>
        <dbReference type="ChEBI" id="CHEBI:58228"/>
    </ligand>
</feature>
<feature type="binding site" evidence="2">
    <location>
        <begin position="134"/>
        <end position="137"/>
    </location>
    <ligand>
        <name>carbamoyl phosphate</name>
        <dbReference type="ChEBI" id="CHEBI:58228"/>
    </ligand>
</feature>
<feature type="binding site" evidence="2">
    <location>
        <position position="167"/>
    </location>
    <ligand>
        <name>L-ornithine</name>
        <dbReference type="ChEBI" id="CHEBI:46911"/>
    </ligand>
</feature>
<feature type="binding site" evidence="2">
    <location>
        <position position="231"/>
    </location>
    <ligand>
        <name>L-ornithine</name>
        <dbReference type="ChEBI" id="CHEBI:46911"/>
    </ligand>
</feature>
<feature type="binding site" evidence="2">
    <location>
        <begin position="235"/>
        <end position="236"/>
    </location>
    <ligand>
        <name>L-ornithine</name>
        <dbReference type="ChEBI" id="CHEBI:46911"/>
    </ligand>
</feature>
<feature type="binding site" evidence="2">
    <location>
        <begin position="273"/>
        <end position="274"/>
    </location>
    <ligand>
        <name>carbamoyl phosphate</name>
        <dbReference type="ChEBI" id="CHEBI:58228"/>
    </ligand>
</feature>
<feature type="binding site" evidence="2">
    <location>
        <position position="318"/>
    </location>
    <ligand>
        <name>carbamoyl phosphate</name>
        <dbReference type="ChEBI" id="CHEBI:58228"/>
    </ligand>
</feature>
<gene>
    <name type="primary">arcB1</name>
    <name type="ordered locus">SE_0103</name>
</gene>
<reference key="1">
    <citation type="journal article" date="2003" name="Mol. Microbiol.">
        <title>Genome-based analysis of virulence genes in a non-biofilm-forming Staphylococcus epidermidis strain (ATCC 12228).</title>
        <authorList>
            <person name="Zhang Y.-Q."/>
            <person name="Ren S.-X."/>
            <person name="Li H.-L."/>
            <person name="Wang Y.-X."/>
            <person name="Fu G."/>
            <person name="Yang J."/>
            <person name="Qin Z.-Q."/>
            <person name="Miao Y.-G."/>
            <person name="Wang W.-Y."/>
            <person name="Chen R.-S."/>
            <person name="Shen Y."/>
            <person name="Chen Z."/>
            <person name="Yuan Z.-H."/>
            <person name="Zhao G.-P."/>
            <person name="Qu D."/>
            <person name="Danchin A."/>
            <person name="Wen Y.-M."/>
        </authorList>
    </citation>
    <scope>NUCLEOTIDE SEQUENCE [LARGE SCALE GENOMIC DNA]</scope>
    <source>
        <strain>ATCC 12228 / FDA PCI 1200</strain>
    </source>
</reference>
<proteinExistence type="inferred from homology"/>
<accession>Q8CU41</accession>
<sequence length="332" mass="37513">MKNLRNRNFLTLLDFTQKEMEFLLNLSEDLKRAKYAGIEQQKMKGKNIALLFEKDSTRTRCAFETAAYDQGAHVTYLGPTGSQMGKKESTKDTARVLGGMYDGIEYRGFSQRVVEDLAKYSGVPVWNGLTDEDHPTQVLADFLTAKEVLKKPYNEINFTYVGDGRNNVANALMQGAAIMGMTFHLVCPKELNPTDELLNRCNDIADKNGGEILITDDIDEGVKGSDVIYTDVWVSMGEPDEVWEKRIKLLEPYRVTKELMKKTGNPHTIFEHCLPSFHDTETIIGKQIQEKYGLTEMEVTNEVFESEQSVVFQEAENRAHTIKAVMVATLGE</sequence>
<organism>
    <name type="scientific">Staphylococcus epidermidis (strain ATCC 12228 / FDA PCI 1200)</name>
    <dbReference type="NCBI Taxonomy" id="176280"/>
    <lineage>
        <taxon>Bacteria</taxon>
        <taxon>Bacillati</taxon>
        <taxon>Bacillota</taxon>
        <taxon>Bacilli</taxon>
        <taxon>Bacillales</taxon>
        <taxon>Staphylococcaceae</taxon>
        <taxon>Staphylococcus</taxon>
    </lineage>
</organism>
<comment type="function">
    <text evidence="1">Reversibly catalyzes the transfer of the carbamoyl group from carbamoyl phosphate (CP) to the N(epsilon) atom of ornithine (ORN) to produce L-citrulline.</text>
</comment>
<comment type="catalytic activity">
    <reaction>
        <text>carbamoyl phosphate + L-ornithine = L-citrulline + phosphate + H(+)</text>
        <dbReference type="Rhea" id="RHEA:19513"/>
        <dbReference type="ChEBI" id="CHEBI:15378"/>
        <dbReference type="ChEBI" id="CHEBI:43474"/>
        <dbReference type="ChEBI" id="CHEBI:46911"/>
        <dbReference type="ChEBI" id="CHEBI:57743"/>
        <dbReference type="ChEBI" id="CHEBI:58228"/>
        <dbReference type="EC" id="2.1.3.3"/>
    </reaction>
</comment>
<comment type="pathway">
    <text>Amino-acid degradation; L-arginine degradation via ADI pathway; carbamoyl phosphate from L-arginine: step 2/2.</text>
</comment>
<comment type="subcellular location">
    <subcellularLocation>
        <location evidence="1">Cytoplasm</location>
    </subcellularLocation>
</comment>
<comment type="similarity">
    <text evidence="3">Belongs to the aspartate/ornithine carbamoyltransferase superfamily. OTCase family.</text>
</comment>
<evidence type="ECO:0000250" key="1"/>
<evidence type="ECO:0000255" key="2">
    <source>
        <dbReference type="HAMAP-Rule" id="MF_01109"/>
    </source>
</evidence>
<evidence type="ECO:0000305" key="3"/>
<dbReference type="EC" id="2.1.3.3"/>
<dbReference type="EMBL" id="AE015929">
    <property type="protein sequence ID" value="AAO03700.1"/>
    <property type="molecule type" value="Genomic_DNA"/>
</dbReference>
<dbReference type="RefSeq" id="NP_763658.1">
    <property type="nucleotide sequence ID" value="NC_004461.1"/>
</dbReference>
<dbReference type="SMR" id="Q8CU41"/>
<dbReference type="KEGG" id="sep:SE_0103"/>
<dbReference type="PATRIC" id="fig|176280.10.peg.97"/>
<dbReference type="eggNOG" id="COG0078">
    <property type="taxonomic scope" value="Bacteria"/>
</dbReference>
<dbReference type="HOGENOM" id="CLU_043846_3_1_9"/>
<dbReference type="OrthoDB" id="9802587at2"/>
<dbReference type="UniPathway" id="UPA00254">
    <property type="reaction ID" value="UER00365"/>
</dbReference>
<dbReference type="Proteomes" id="UP000001411">
    <property type="component" value="Chromosome"/>
</dbReference>
<dbReference type="GO" id="GO:0005737">
    <property type="term" value="C:cytoplasm"/>
    <property type="evidence" value="ECO:0007669"/>
    <property type="project" value="UniProtKB-SubCell"/>
</dbReference>
<dbReference type="GO" id="GO:0016597">
    <property type="term" value="F:amino acid binding"/>
    <property type="evidence" value="ECO:0007669"/>
    <property type="project" value="InterPro"/>
</dbReference>
<dbReference type="GO" id="GO:0004585">
    <property type="term" value="F:ornithine carbamoyltransferase activity"/>
    <property type="evidence" value="ECO:0007669"/>
    <property type="project" value="UniProtKB-UniRule"/>
</dbReference>
<dbReference type="GO" id="GO:0042450">
    <property type="term" value="P:arginine biosynthetic process via ornithine"/>
    <property type="evidence" value="ECO:0007669"/>
    <property type="project" value="TreeGrafter"/>
</dbReference>
<dbReference type="GO" id="GO:0019547">
    <property type="term" value="P:arginine catabolic process to ornithine"/>
    <property type="evidence" value="ECO:0007669"/>
    <property type="project" value="UniProtKB-UniPathway"/>
</dbReference>
<dbReference type="GO" id="GO:0019240">
    <property type="term" value="P:citrulline biosynthetic process"/>
    <property type="evidence" value="ECO:0007669"/>
    <property type="project" value="TreeGrafter"/>
</dbReference>
<dbReference type="GO" id="GO:0006526">
    <property type="term" value="P:L-arginine biosynthetic process"/>
    <property type="evidence" value="ECO:0007669"/>
    <property type="project" value="UniProtKB-UniRule"/>
</dbReference>
<dbReference type="FunFam" id="3.40.50.1370:FF:000004">
    <property type="entry name" value="Ornithine carbamoyltransferase"/>
    <property type="match status" value="1"/>
</dbReference>
<dbReference type="Gene3D" id="3.40.50.1370">
    <property type="entry name" value="Aspartate/ornithine carbamoyltransferase"/>
    <property type="match status" value="2"/>
</dbReference>
<dbReference type="HAMAP" id="MF_01109">
    <property type="entry name" value="OTCase"/>
    <property type="match status" value="1"/>
</dbReference>
<dbReference type="InterPro" id="IPR006132">
    <property type="entry name" value="Asp/Orn_carbamoyltranf_P-bd"/>
</dbReference>
<dbReference type="InterPro" id="IPR006130">
    <property type="entry name" value="Asp/Orn_carbamoylTrfase"/>
</dbReference>
<dbReference type="InterPro" id="IPR036901">
    <property type="entry name" value="Asp/Orn_carbamoylTrfase_sf"/>
</dbReference>
<dbReference type="InterPro" id="IPR006131">
    <property type="entry name" value="Asp_carbamoyltransf_Asp/Orn-bd"/>
</dbReference>
<dbReference type="InterPro" id="IPR002292">
    <property type="entry name" value="Orn/put_carbamltrans"/>
</dbReference>
<dbReference type="InterPro" id="IPR024904">
    <property type="entry name" value="OTCase_ArgI"/>
</dbReference>
<dbReference type="NCBIfam" id="TIGR00658">
    <property type="entry name" value="orni_carb_tr"/>
    <property type="match status" value="1"/>
</dbReference>
<dbReference type="NCBIfam" id="NF003286">
    <property type="entry name" value="PRK04284.1"/>
    <property type="match status" value="1"/>
</dbReference>
<dbReference type="PANTHER" id="PTHR45753:SF2">
    <property type="entry name" value="ORNITHINE CARBAMOYLTRANSFERASE"/>
    <property type="match status" value="1"/>
</dbReference>
<dbReference type="PANTHER" id="PTHR45753">
    <property type="entry name" value="ORNITHINE CARBAMOYLTRANSFERASE, MITOCHONDRIAL"/>
    <property type="match status" value="1"/>
</dbReference>
<dbReference type="Pfam" id="PF00185">
    <property type="entry name" value="OTCace"/>
    <property type="match status" value="1"/>
</dbReference>
<dbReference type="Pfam" id="PF02729">
    <property type="entry name" value="OTCace_N"/>
    <property type="match status" value="1"/>
</dbReference>
<dbReference type="PRINTS" id="PR00100">
    <property type="entry name" value="AOTCASE"/>
</dbReference>
<dbReference type="PRINTS" id="PR00102">
    <property type="entry name" value="OTCASE"/>
</dbReference>
<dbReference type="SUPFAM" id="SSF53671">
    <property type="entry name" value="Aspartate/ornithine carbamoyltransferase"/>
    <property type="match status" value="1"/>
</dbReference>
<dbReference type="PROSITE" id="PS00097">
    <property type="entry name" value="CARBAMOYLTRANSFERASE"/>
    <property type="match status" value="1"/>
</dbReference>
<protein>
    <recommendedName>
        <fullName>Ornithine carbamoyltransferase 1, catabolic</fullName>
        <shortName>OTCase 1</shortName>
        <ecNumber>2.1.3.3</ecNumber>
    </recommendedName>
</protein>
<name>OTCC1_STAES</name>